<proteinExistence type="evidence at protein level"/>
<evidence type="ECO:0000255" key="1">
    <source>
        <dbReference type="PROSITE-ProRule" id="PRU00159"/>
    </source>
</evidence>
<evidence type="ECO:0000269" key="2">
    <source>
    </source>
</evidence>
<evidence type="ECO:0000269" key="3">
    <source>
    </source>
</evidence>
<evidence type="ECO:0000269" key="4">
    <source>
    </source>
</evidence>
<evidence type="ECO:0000269" key="5">
    <source>
    </source>
</evidence>
<evidence type="ECO:0000269" key="6">
    <source>
    </source>
</evidence>
<evidence type="ECO:0000269" key="7">
    <source>
    </source>
</evidence>
<evidence type="ECO:0000269" key="8">
    <source>
    </source>
</evidence>
<evidence type="ECO:0000269" key="9">
    <source>
    </source>
</evidence>
<evidence type="ECO:0000269" key="10">
    <source>
    </source>
</evidence>
<evidence type="ECO:0000269" key="11">
    <source>
    </source>
</evidence>
<evidence type="ECO:0000269" key="12">
    <source>
    </source>
</evidence>
<evidence type="ECO:0000269" key="13">
    <source>
    </source>
</evidence>
<evidence type="ECO:0000269" key="14">
    <source>
    </source>
</evidence>
<evidence type="ECO:0000269" key="15">
    <source>
    </source>
</evidence>
<evidence type="ECO:0000305" key="16"/>
<evidence type="ECO:0000305" key="17">
    <source>
    </source>
</evidence>
<evidence type="ECO:0000312" key="18">
    <source>
        <dbReference type="EMBL" id="BAB43977.2"/>
    </source>
</evidence>
<evidence type="ECO:0000312" key="19">
    <source>
        <dbReference type="EMBL" id="BAC11708.1"/>
    </source>
</evidence>
<evidence type="ECO:0000312" key="20">
    <source>
        <dbReference type="Proteomes" id="UP000001940"/>
    </source>
</evidence>
<evidence type="ECO:0000312" key="21">
    <source>
        <dbReference type="WormBase" id="R03G5.2"/>
    </source>
</evidence>
<keyword id="KW-0067">ATP-binding</keyword>
<keyword id="KW-0418">Kinase</keyword>
<keyword id="KW-0460">Magnesium</keyword>
<keyword id="KW-0479">Metal-binding</keyword>
<keyword id="KW-0524">Neurogenesis</keyword>
<keyword id="KW-0547">Nucleotide-binding</keyword>
<keyword id="KW-0597">Phosphoprotein</keyword>
<keyword id="KW-1185">Reference proteome</keyword>
<keyword id="KW-0723">Serine/threonine-protein kinase</keyword>
<keyword id="KW-0346">Stress response</keyword>
<keyword id="KW-0808">Transferase</keyword>
<keyword id="KW-0829">Tyrosine-protein kinase</keyword>
<gene>
    <name evidence="21" type="primary">sek-1</name>
    <name evidence="21" type="ORF">R03G5.2</name>
</gene>
<organism evidence="20">
    <name type="scientific">Caenorhabditis elegans</name>
    <dbReference type="NCBI Taxonomy" id="6239"/>
    <lineage>
        <taxon>Eukaryota</taxon>
        <taxon>Metazoa</taxon>
        <taxon>Ecdysozoa</taxon>
        <taxon>Nematoda</taxon>
        <taxon>Chromadorea</taxon>
        <taxon>Rhabditida</taxon>
        <taxon>Rhabditina</taxon>
        <taxon>Rhabditomorpha</taxon>
        <taxon>Rhabditoidea</taxon>
        <taxon>Rhabditidae</taxon>
        <taxon>Peloderinae</taxon>
        <taxon>Caenorhabditis</taxon>
    </lineage>
</organism>
<feature type="chain" id="PRO_0000433601" description="Dual specificity mitogen-activated protein kinase kinase sek-1" evidence="16">
    <location>
        <begin position="1"/>
        <end position="336"/>
    </location>
</feature>
<feature type="domain" description="Protein kinase" evidence="1">
    <location>
        <begin position="50"/>
        <end position="311"/>
    </location>
</feature>
<feature type="active site" description="Proton acceptor" evidence="1">
    <location>
        <position position="176"/>
    </location>
</feature>
<feature type="binding site" evidence="1">
    <location>
        <begin position="56"/>
        <end position="64"/>
    </location>
    <ligand>
        <name>ATP</name>
        <dbReference type="ChEBI" id="CHEBI:30616"/>
    </ligand>
</feature>
<feature type="binding site" evidence="1">
    <location>
        <position position="79"/>
    </location>
    <ligand>
        <name>ATP</name>
        <dbReference type="ChEBI" id="CHEBI:30616"/>
    </ligand>
</feature>
<feature type="modified residue" description="Phosphoserine" evidence="3">
    <location>
        <position position="204"/>
    </location>
</feature>
<feature type="modified residue" description="Phosphothreonine" evidence="3">
    <location>
        <position position="208"/>
    </location>
</feature>
<feature type="mutagenesis site" description="Loss of kinase activity." evidence="3">
    <original>K</original>
    <variation>R</variation>
    <location>
        <position position="79"/>
    </location>
</feature>
<feature type="mutagenesis site" description="Phosphomimetic mutant which likely results in constitutive activation. Loss of str-2 expression in either of the AWC neurons; when associated with D-208." evidence="3">
    <original>S</original>
    <variation>D</variation>
    <location>
        <position position="204"/>
    </location>
</feature>
<feature type="mutagenesis site" description="Phosphomimetic mutant which likely results in constitutive activation. Loss of str-2 expression in either of the AWC neurons; when associated with D-204." evidence="3">
    <original>T</original>
    <variation>D</variation>
    <location>
        <position position="208"/>
    </location>
</feature>
<feature type="mutagenesis site" description="In ag1; loss of pmk-1 phosphorylation. Upon pathogenic bacterial infection, decrease in survival rate and severe loss of gst-4 and gsc-1 expression. Loss of nlp-29 expression in response to fungal infection. Moderate decrease in survival rate upon C.cinerea galectin Cgl2 exposure. Promotes linker cell survival in 53 percent of animals. Egg-laying defect. Normal development and lifespan." evidence="4 9 11 13 15">
    <original>G</original>
    <variation>R</variation>
    <location>
        <position position="212"/>
    </location>
</feature>
<name>SEK1_CAEEL</name>
<sequence length="336" mass="38700">MERKGRERKLPGMKIVMPTPVETPTMNLEDRCLIKLTNESEEIEIAATDLVVLEELGKGGYGIVEKMQHRQSGIIMAVKRIKSSINDQSQKQMLNELDACRRSDCCPQMVRFYGAMFREGDVWICMEVMDTSLDKFYRHAYKIGKHIPEPFIGKMALSVIEGLNFMKEQLNLIHRDVKPSNILLNRHGQVKICDFGISGHLTNSMAKTVQAGCKPYMPPERIDGETKSAYDVRADVWSLGITIIEIAVGTHPYANWKTPFEQLKQVVKEPPPKLPMESGFSVDCQYFVKRCLEKDYNERPKYPELLAMPFMEQARNEKQFSMARFINEILDTVWRR</sequence>
<reference evidence="18" key="1">
    <citation type="journal article" date="2002" name="EMBO Rep.">
        <title>SEK-1 MAPKK mediates Ca2+ signaling to determine neuronal asymmetric development in Caenorhabditis elegans.</title>
        <authorList>
            <person name="Tanaka-Hino M."/>
            <person name="Sagasti A."/>
            <person name="Hisamoto N."/>
            <person name="Kawasaki M."/>
            <person name="Nakano S."/>
            <person name="Ninomiya-Tsuji J."/>
            <person name="Bargmann C.I."/>
            <person name="Matsumoto K."/>
        </authorList>
    </citation>
    <scope>NUCLEOTIDE SEQUENCE [MRNA]</scope>
    <scope>FUNCTION</scope>
    <scope>CATALYTIC ACTIVITY</scope>
    <scope>COFACTOR</scope>
    <scope>ACTIVITY REGULATION</scope>
    <scope>INTERACTION WITH NSY-1</scope>
    <scope>PHOSPHORYLATION AT SER-204 AND THR-208</scope>
    <scope>MUTAGENESIS OF LYS-79; SER-204 AND THR-208</scope>
</reference>
<reference evidence="16" key="2">
    <citation type="journal article" date="2002" name="Science">
        <title>A conserved p38 MAP kinase pathway in Caenorhabditis elegans innate immunity.</title>
        <authorList>
            <person name="Kim D.H."/>
            <person name="Feinbaum R."/>
            <person name="Alloing G."/>
            <person name="Emerson F.E."/>
            <person name="Garsin D.A."/>
            <person name="Inoue H."/>
            <person name="Tanaka-Hino M."/>
            <person name="Hisamoto N."/>
            <person name="Matsumoto K."/>
            <person name="Tan M.-W."/>
            <person name="Ausubel F.M."/>
        </authorList>
    </citation>
    <scope>NUCLEOTIDE SEQUENCE [MRNA]</scope>
    <scope>FUNCTION</scope>
    <scope>MUTAGENESIS OF GLY-212</scope>
</reference>
<reference evidence="19" key="3">
    <citation type="submission" date="1999-02" db="EMBL/GenBank/DDBJ databases">
        <title>MAP kinase kinase.</title>
        <authorList>
            <person name="Matsumoto K."/>
            <person name="Kawasaki M."/>
            <person name="Hisamoto N."/>
            <person name="Tanaka M."/>
        </authorList>
    </citation>
    <scope>NUCLEOTIDE SEQUENCE [MRNA]</scope>
</reference>
<reference evidence="20" key="4">
    <citation type="journal article" date="1998" name="Science">
        <title>Genome sequence of the nematode C. elegans: a platform for investigating biology.</title>
        <authorList>
            <consortium name="The C. elegans sequencing consortium"/>
        </authorList>
    </citation>
    <scope>NUCLEOTIDE SEQUENCE [LARGE SCALE GENOMIC DNA]</scope>
    <source>
        <strain evidence="20">Bristol N2</strain>
    </source>
</reference>
<reference key="5">
    <citation type="journal article" date="2001" name="Neuron">
        <title>UNC-16, a JNK-signaling scaffold protein, regulates vesicle transport in C. elegans.</title>
        <authorList>
            <person name="Byrd D.T."/>
            <person name="Kawasaki M."/>
            <person name="Walcoff M."/>
            <person name="Hisamoto N."/>
            <person name="Matsumoto K."/>
            <person name="Jin Y."/>
        </authorList>
    </citation>
    <scope>INTERACTION WITH UNC-16</scope>
</reference>
<reference key="6">
    <citation type="journal article" date="2004" name="Proc. Natl. Acad. Sci. U.S.A.">
        <title>Mitogen-activated protein kinase pathways defend against bacterial pore-forming toxins.</title>
        <authorList>
            <person name="Huffman D.L."/>
            <person name="Abrami L."/>
            <person name="Sasik R."/>
            <person name="Corbeil J."/>
            <person name="van der Goot F.G."/>
            <person name="Aroian R.V."/>
        </authorList>
    </citation>
    <scope>FUNCTION</scope>
    <scope>INDUCTION</scope>
</reference>
<reference evidence="16" key="7">
    <citation type="journal article" date="2005" name="Genes Dev.">
        <title>The C. elegans p38 MAPK pathway regulates nuclear localization of the transcription factor SKN-1 in oxidative stress response.</title>
        <authorList>
            <person name="Inoue H."/>
            <person name="Hisamoto N."/>
            <person name="An J.H."/>
            <person name="Oliveira R.P."/>
            <person name="Nishida E."/>
            <person name="Blackwell T.K."/>
            <person name="Matsumoto K."/>
        </authorList>
    </citation>
    <scope>FUNCTION</scope>
</reference>
<reference evidence="16" key="8">
    <citation type="journal article" date="2005" name="Mech. Ageing Dev.">
        <title>The p38 signal transduction pathway participates in the oxidative stress-mediated translocation of DAF-16 to Caenorhabditis elegans nuclei.</title>
        <authorList>
            <person name="Kondo M."/>
            <person name="Yanase S."/>
            <person name="Ishii T."/>
            <person name="Hartman P.S."/>
            <person name="Matsumoto K."/>
            <person name="Ishii N."/>
        </authorList>
    </citation>
    <scope>FUNCTION</scope>
</reference>
<reference evidence="16" key="9">
    <citation type="journal article" date="2006" name="Cell Death Differ.">
        <title>Stress-induced germ cell apoptosis by a p53 independent pathway in Caenorhabditis elegans.</title>
        <authorList>
            <person name="Salinas L.S."/>
            <person name="Maldonado E."/>
            <person name="Navarro R.E."/>
        </authorList>
    </citation>
    <scope>FUNCTION</scope>
    <scope>DISRUPTION PHENOTYPE</scope>
</reference>
<reference evidence="16" key="10">
    <citation type="journal article" date="2008" name="Curr. Biol.">
        <title>Distinct innate immune responses to infection and wounding in the C. elegans epidermis.</title>
        <authorList>
            <person name="Pujol N."/>
            <person name="Cypowyj S."/>
            <person name="Ziegler K."/>
            <person name="Millet A."/>
            <person name="Astrain A."/>
            <person name="Goncharov A."/>
            <person name="Jin Y."/>
            <person name="Chisholm A.D."/>
            <person name="Ewbank J.J."/>
        </authorList>
    </citation>
    <scope>FUNCTION</scope>
    <scope>MUTAGENESIS OF GLY-212</scope>
</reference>
<reference evidence="16" key="11">
    <citation type="journal article" date="2009" name="Chem. Biol. Interact.">
        <title>Copper-induced germline apoptosis in Caenorhabditis elegans: the independent roles of DNA damage response signaling and the dependent roles of MAPK cascades.</title>
        <authorList>
            <person name="Wang S."/>
            <person name="Wu L."/>
            <person name="Wang Y."/>
            <person name="Luo X."/>
            <person name="Lu Y."/>
        </authorList>
    </citation>
    <scope>FUNCTION</scope>
</reference>
<reference key="12">
    <citation type="journal article" date="2010" name="PLoS Pathog.">
        <title>Caenorhabditis elegans N-glycan core beta-galactoside confers sensitivity towards nematotoxic fungal galectin CGL2.</title>
        <authorList>
            <person name="Butschi A."/>
            <person name="Titz A."/>
            <person name="Waelti M.A."/>
            <person name="Olieric V."/>
            <person name="Paschinger K."/>
            <person name="Noebauer K."/>
            <person name="Guo X."/>
            <person name="Seeberger P.H."/>
            <person name="Wilson I.B."/>
            <person name="Aebi M."/>
            <person name="Hengartner M.O."/>
            <person name="Kuenzler M."/>
        </authorList>
    </citation>
    <scope>FUNCTION</scope>
    <scope>MUTAGENESIS OF GLY-212</scope>
</reference>
<reference key="13">
    <citation type="journal article" date="2011" name="Genetics">
        <title>Regulation of anoxic death in Caenorhabditis elegans by mammalian apoptosis signal-regulating kinase (ASK) family proteins.</title>
        <authorList>
            <person name="Hayakawa T."/>
            <person name="Kato K."/>
            <person name="Hayakawa R."/>
            <person name="Hisamoto N."/>
            <person name="Matsumoto K."/>
            <person name="Takeda K."/>
            <person name="Ichijo H."/>
        </authorList>
    </citation>
    <scope>FUNCTION</scope>
</reference>
<reference key="14">
    <citation type="journal article" date="2011" name="PLoS Pathog.">
        <title>Ce-Duox1/BLI-3 generated reactive oxygen species trigger protective SKN-1 activity via p38 MAPK signaling during infection in C. elegans.</title>
        <authorList>
            <person name="Hoeven R.V."/>
            <person name="McCallum K.C."/>
            <person name="Cruz M.R."/>
            <person name="Garsin D.A."/>
        </authorList>
    </citation>
    <scope>FUNCTION</scope>
    <scope>DISRUPTION PHENOTYPE</scope>
    <scope>MUTAGENESIS OF GLY-212</scope>
</reference>
<reference key="15">
    <citation type="journal article" date="2012" name="J. Biol. Chem.">
        <title>Stabilization of RNT-1 protein, runt-related transcription factor (RUNX) protein homolog of Caenorhabditis elegans, by oxidative stress through mitogen-activated protein kinase pathway.</title>
        <authorList>
            <person name="Lee K."/>
            <person name="Shim J."/>
            <person name="Bae J."/>
            <person name="Kim Y.J."/>
            <person name="Lee J."/>
        </authorList>
    </citation>
    <scope>FUNCTION</scope>
    <scope>DISRUPTION PHENOTYPE</scope>
</reference>
<reference key="16">
    <citation type="journal article" date="2012" name="Science">
        <title>Control of nonapoptotic developmental cell death in Caenorhabditis elegans by a polyglutamine-repeat protein.</title>
        <authorList>
            <person name="Blum E.S."/>
            <person name="Abraham M.C."/>
            <person name="Yoshimura S."/>
            <person name="Lu Y."/>
            <person name="Shaham S."/>
        </authorList>
    </citation>
    <scope>FUNCTION</scope>
    <scope>TISSUE SPECIFICITY</scope>
    <scope>MUTAGENESIS OF GLY-212</scope>
</reference>
<dbReference type="EC" id="2.7.12.2" evidence="3"/>
<dbReference type="EMBL" id="AB060731">
    <property type="protein sequence ID" value="BAB43977.2"/>
    <property type="molecule type" value="mRNA"/>
</dbReference>
<dbReference type="EMBL" id="AB024087">
    <property type="protein sequence ID" value="BAC11708.1"/>
    <property type="molecule type" value="mRNA"/>
</dbReference>
<dbReference type="EMBL" id="BX284606">
    <property type="protein sequence ID" value="CCD68028.1"/>
    <property type="molecule type" value="Genomic_DNA"/>
</dbReference>
<dbReference type="PIR" id="T16665">
    <property type="entry name" value="T16665"/>
</dbReference>
<dbReference type="RefSeq" id="NP_509322.2">
    <property type="nucleotide sequence ID" value="NM_076921.4"/>
</dbReference>
<dbReference type="SMR" id="G5EDF7"/>
<dbReference type="FunCoup" id="G5EDF7">
    <property type="interactions" value="1407"/>
</dbReference>
<dbReference type="IntAct" id="G5EDF7">
    <property type="interactions" value="4"/>
</dbReference>
<dbReference type="STRING" id="6239.R03G5.2.1"/>
<dbReference type="iPTMnet" id="G5EDF7"/>
<dbReference type="PaxDb" id="6239-R03G5.2.2"/>
<dbReference type="PeptideAtlas" id="G5EDF7"/>
<dbReference type="EnsemblMetazoa" id="R03G5.2.1">
    <property type="protein sequence ID" value="R03G5.2.1"/>
    <property type="gene ID" value="WBGene00004758"/>
</dbReference>
<dbReference type="GeneID" id="181043"/>
<dbReference type="KEGG" id="cel:CELE_R03G5.2"/>
<dbReference type="AGR" id="WB:WBGene00004758"/>
<dbReference type="CTD" id="181043"/>
<dbReference type="WormBase" id="R03G5.2">
    <property type="protein sequence ID" value="CE31210"/>
    <property type="gene ID" value="WBGene00004758"/>
    <property type="gene designation" value="sek-1"/>
</dbReference>
<dbReference type="eggNOG" id="KOG0984">
    <property type="taxonomic scope" value="Eukaryota"/>
</dbReference>
<dbReference type="GeneTree" id="ENSGT00940000168458"/>
<dbReference type="HOGENOM" id="CLU_000288_63_23_1"/>
<dbReference type="InParanoid" id="G5EDF7"/>
<dbReference type="OMA" id="HAYKIGK"/>
<dbReference type="OrthoDB" id="10252354at2759"/>
<dbReference type="PhylomeDB" id="G5EDF7"/>
<dbReference type="Reactome" id="R-CEL-168638">
    <property type="pathway name" value="NOD1/2 Signaling Pathway"/>
</dbReference>
<dbReference type="Reactome" id="R-CEL-2559580">
    <property type="pathway name" value="Oxidative Stress Induced Senescence"/>
</dbReference>
<dbReference type="Reactome" id="R-CEL-450302">
    <property type="pathway name" value="activated TAK1 mediates p38 MAPK activation"/>
</dbReference>
<dbReference type="Reactome" id="R-CEL-6811555">
    <property type="pathway name" value="PI5P Regulates TP53 Acetylation"/>
</dbReference>
<dbReference type="Reactome" id="R-CEL-9833482">
    <property type="pathway name" value="PKR-mediated signaling"/>
</dbReference>
<dbReference type="SignaLink" id="G5EDF7"/>
<dbReference type="PRO" id="PR:G5EDF7"/>
<dbReference type="Proteomes" id="UP000001940">
    <property type="component" value="Chromosome X"/>
</dbReference>
<dbReference type="Bgee" id="WBGene00004758">
    <property type="expression patterns" value="Expressed in pharyngeal muscle cell (C elegans) and 4 other cell types or tissues"/>
</dbReference>
<dbReference type="GO" id="GO:0005524">
    <property type="term" value="F:ATP binding"/>
    <property type="evidence" value="ECO:0007669"/>
    <property type="project" value="UniProtKB-KW"/>
</dbReference>
<dbReference type="GO" id="GO:0004708">
    <property type="term" value="F:MAP kinase kinase activity"/>
    <property type="evidence" value="ECO:0000314"/>
    <property type="project" value="WormBase"/>
</dbReference>
<dbReference type="GO" id="GO:0046872">
    <property type="term" value="F:metal ion binding"/>
    <property type="evidence" value="ECO:0007669"/>
    <property type="project" value="UniProtKB-KW"/>
</dbReference>
<dbReference type="GO" id="GO:0031435">
    <property type="term" value="F:mitogen-activated protein kinase kinase kinase binding"/>
    <property type="evidence" value="ECO:0000353"/>
    <property type="project" value="WormBase"/>
</dbReference>
<dbReference type="GO" id="GO:0106310">
    <property type="term" value="F:protein serine kinase activity"/>
    <property type="evidence" value="ECO:0000316"/>
    <property type="project" value="UniProtKB"/>
</dbReference>
<dbReference type="GO" id="GO:0004674">
    <property type="term" value="F:protein serine/threonine kinase activity"/>
    <property type="evidence" value="ECO:0007669"/>
    <property type="project" value="UniProtKB-KW"/>
</dbReference>
<dbReference type="GO" id="GO:0004712">
    <property type="term" value="F:protein serine/threonine/tyrosine kinase activity"/>
    <property type="evidence" value="ECO:0000314"/>
    <property type="project" value="WormBase"/>
</dbReference>
<dbReference type="GO" id="GO:0004713">
    <property type="term" value="F:protein tyrosine kinase activity"/>
    <property type="evidence" value="ECO:0007669"/>
    <property type="project" value="UniProtKB-KW"/>
</dbReference>
<dbReference type="GO" id="GO:0140367">
    <property type="term" value="P:antibacterial innate immune response"/>
    <property type="evidence" value="ECO:0000315"/>
    <property type="project" value="WormBase"/>
</dbReference>
<dbReference type="GO" id="GO:0050832">
    <property type="term" value="P:defense response to fungus"/>
    <property type="evidence" value="ECO:0000315"/>
    <property type="project" value="UniProtKB"/>
</dbReference>
<dbReference type="GO" id="GO:0050829">
    <property type="term" value="P:defense response to Gram-negative bacterium"/>
    <property type="evidence" value="ECO:0000315"/>
    <property type="project" value="UniProtKB"/>
</dbReference>
<dbReference type="GO" id="GO:0050830">
    <property type="term" value="P:defense response to Gram-positive bacterium"/>
    <property type="evidence" value="ECO:0000315"/>
    <property type="project" value="UniProtKB"/>
</dbReference>
<dbReference type="GO" id="GO:0035545">
    <property type="term" value="P:determination of left/right asymmetry in nervous system"/>
    <property type="evidence" value="ECO:0000315"/>
    <property type="project" value="WormBase"/>
</dbReference>
<dbReference type="GO" id="GO:0045087">
    <property type="term" value="P:innate immune response"/>
    <property type="evidence" value="ECO:0000315"/>
    <property type="project" value="WormBase"/>
</dbReference>
<dbReference type="GO" id="GO:0000165">
    <property type="term" value="P:MAPK cascade"/>
    <property type="evidence" value="ECO:0000315"/>
    <property type="project" value="WormBase"/>
</dbReference>
<dbReference type="GO" id="GO:1902236">
    <property type="term" value="P:negative regulation of endoplasmic reticulum stress-induced intrinsic apoptotic signaling pathway"/>
    <property type="evidence" value="ECO:0000315"/>
    <property type="project" value="ParkinsonsUK-UCL"/>
</dbReference>
<dbReference type="GO" id="GO:0038066">
    <property type="term" value="P:p38MAPK cascade"/>
    <property type="evidence" value="ECO:0000315"/>
    <property type="project" value="WormBase"/>
</dbReference>
<dbReference type="GO" id="GO:1901046">
    <property type="term" value="P:positive regulation of egg-laying behavior"/>
    <property type="evidence" value="ECO:0000315"/>
    <property type="project" value="WormBase"/>
</dbReference>
<dbReference type="GO" id="GO:0010628">
    <property type="term" value="P:positive regulation of gene expression"/>
    <property type="evidence" value="ECO:0000315"/>
    <property type="project" value="UniProtKB"/>
</dbReference>
<dbReference type="GO" id="GO:0045944">
    <property type="term" value="P:positive regulation of transcription by RNA polymerase II"/>
    <property type="evidence" value="ECO:0000315"/>
    <property type="project" value="WormBase"/>
</dbReference>
<dbReference type="GO" id="GO:0046662">
    <property type="term" value="P:regulation of egg-laying behavior"/>
    <property type="evidence" value="ECO:0000315"/>
    <property type="project" value="WormBase"/>
</dbReference>
<dbReference type="GO" id="GO:0093002">
    <property type="term" value="P:response to nematicide"/>
    <property type="evidence" value="ECO:0000315"/>
    <property type="project" value="UniProtKB"/>
</dbReference>
<dbReference type="GO" id="GO:0006979">
    <property type="term" value="P:response to oxidative stress"/>
    <property type="evidence" value="ECO:0000315"/>
    <property type="project" value="UniProtKB"/>
</dbReference>
<dbReference type="GO" id="GO:0000302">
    <property type="term" value="P:response to reactive oxygen species"/>
    <property type="evidence" value="ECO:0000315"/>
    <property type="project" value="WormBase"/>
</dbReference>
<dbReference type="GO" id="GO:0000303">
    <property type="term" value="P:response to superoxide"/>
    <property type="evidence" value="ECO:0000315"/>
    <property type="project" value="WormBase"/>
</dbReference>
<dbReference type="GO" id="GO:0009636">
    <property type="term" value="P:response to toxic substance"/>
    <property type="evidence" value="ECO:0000315"/>
    <property type="project" value="UniProtKB"/>
</dbReference>
<dbReference type="GO" id="GO:0034607">
    <property type="term" value="P:turning behavior involved in mating"/>
    <property type="evidence" value="ECO:0000315"/>
    <property type="project" value="WormBase"/>
</dbReference>
<dbReference type="CDD" id="cd06617">
    <property type="entry name" value="PKc_MKK3_6"/>
    <property type="match status" value="1"/>
</dbReference>
<dbReference type="FunFam" id="3.30.200.20:FF:000576">
    <property type="entry name" value="CBN-SEK-1 protein"/>
    <property type="match status" value="1"/>
</dbReference>
<dbReference type="FunFam" id="1.10.510.10:FF:001128">
    <property type="entry name" value="CRE-SEK-1 protein"/>
    <property type="match status" value="1"/>
</dbReference>
<dbReference type="Gene3D" id="3.30.200.20">
    <property type="entry name" value="Phosphorylase Kinase, domain 1"/>
    <property type="match status" value="1"/>
</dbReference>
<dbReference type="Gene3D" id="1.10.510.10">
    <property type="entry name" value="Transferase(Phosphotransferase) domain 1"/>
    <property type="match status" value="1"/>
</dbReference>
<dbReference type="InterPro" id="IPR011009">
    <property type="entry name" value="Kinase-like_dom_sf"/>
</dbReference>
<dbReference type="InterPro" id="IPR000719">
    <property type="entry name" value="Prot_kinase_dom"/>
</dbReference>
<dbReference type="InterPro" id="IPR017441">
    <property type="entry name" value="Protein_kinase_ATP_BS"/>
</dbReference>
<dbReference type="InterPro" id="IPR008271">
    <property type="entry name" value="Ser/Thr_kinase_AS"/>
</dbReference>
<dbReference type="PANTHER" id="PTHR48013">
    <property type="entry name" value="DUAL SPECIFICITY MITOGEN-ACTIVATED PROTEIN KINASE KINASE 5-RELATED"/>
    <property type="match status" value="1"/>
</dbReference>
<dbReference type="PANTHER" id="PTHR48013:SF28">
    <property type="entry name" value="DUAL SPECIFICITY MITOGEN-ACTIVATED PROTEIN KINASE KINASE SEK-1"/>
    <property type="match status" value="1"/>
</dbReference>
<dbReference type="Pfam" id="PF00069">
    <property type="entry name" value="Pkinase"/>
    <property type="match status" value="1"/>
</dbReference>
<dbReference type="SMART" id="SM00220">
    <property type="entry name" value="S_TKc"/>
    <property type="match status" value="1"/>
</dbReference>
<dbReference type="SUPFAM" id="SSF56112">
    <property type="entry name" value="Protein kinase-like (PK-like)"/>
    <property type="match status" value="1"/>
</dbReference>
<dbReference type="PROSITE" id="PS00107">
    <property type="entry name" value="PROTEIN_KINASE_ATP"/>
    <property type="match status" value="1"/>
</dbReference>
<dbReference type="PROSITE" id="PS50011">
    <property type="entry name" value="PROTEIN_KINASE_DOM"/>
    <property type="match status" value="1"/>
</dbReference>
<dbReference type="PROSITE" id="PS00108">
    <property type="entry name" value="PROTEIN_KINASE_ST"/>
    <property type="match status" value="1"/>
</dbReference>
<accession>G5EDF7</accession>
<comment type="function">
    <text evidence="3 4 5 6 7 8 9 10 11 12 13 14 15">Dual specificity protein kinase which acts as an essential component of the p38 signal transduction pathway which is also composed of upstream effector nsy-1 and downstream effector pmk-1 (PubMed:11751572). May phosphorylate pmk-1 (PubMed:12142542, PubMed:16166371). Downstream of CaMKII unc-43 and adapter protein tir-1, plays a role in determining asymmetric cell fates in olfactory AWC neurons during neuronal development. Activation results in the repression of odorant receptor str-2 expression in one of the 2 AWC neurons (PubMed:11751572, PubMed:12142542). Involved in resistance to pathogenic Gram-positive and Gram-negative bacterial and fungal infection (PubMed:12142542, PubMed:18394898, PubMed:22216003). Involved in resistance to the nematotoxic C.cinerea galectin Cgl2 (PubMed:20062796). Probably by promoting pmk-1-mediated activation of skn-1, involved in the up-regulation of gcs-1 and glutathione-S-transferase gst-4 expression upon bacterial infection (PubMed:22216003). Probably downstream of tir-1, required for the expression of antimicrobial peptide nlp-29 in the epidermis in response to fungal infection or physical injury (PubMed:18394898, PubMed:22308034). Regulates susceptibility of B.thuringiensis pore-forming toxin Cry5B and Cry21A (PubMed:15256590). Involved in the response to oxidative stress (PubMed:15888317, PubMed:22308034). May regulate transcription factor daf-16 localization during oxidative stress (PubMed:15888317). By phosphorylating pmk-1, regulates skn-1 localization during oxidative stress (PubMed:16166371). By phosphorylating and activating pmk-1, plays a role in the stabilization of transcription factor rnt-1 in the intestine during oxidative stress (PubMed:22308034). Up-regulates expression of gcs-1 in intestine upon arsenite treatment (PubMed:16166371). Regulates germline proliferation in response to osmotic stress, starvation and germline apoptosis induced by heavy metals, such as Cu(2+) (PubMed:16729024, PubMed:19497412). In association with mek-1, regulates germline cell apoptosis in response to oxidative, osmotic and heat shock stresses (PubMed:16729024). Plays a role downstream of tir-1/nsy-1 in regulating susceptibility to anoxia (PubMed:21212236). In males, by regulating pqn-41 expression, involved in non-apoptotic death of the linker cell which guides gonad elongation during larval development (PubMed:22363008). Involved in egg laying (PubMed:12142542).</text>
</comment>
<comment type="catalytic activity">
    <reaction evidence="3">
        <text>L-seryl-[protein] + ATP = O-phospho-L-seryl-[protein] + ADP + H(+)</text>
        <dbReference type="Rhea" id="RHEA:17989"/>
        <dbReference type="Rhea" id="RHEA-COMP:9863"/>
        <dbReference type="Rhea" id="RHEA-COMP:11604"/>
        <dbReference type="ChEBI" id="CHEBI:15378"/>
        <dbReference type="ChEBI" id="CHEBI:29999"/>
        <dbReference type="ChEBI" id="CHEBI:30616"/>
        <dbReference type="ChEBI" id="CHEBI:83421"/>
        <dbReference type="ChEBI" id="CHEBI:456216"/>
        <dbReference type="EC" id="2.7.12.2"/>
    </reaction>
</comment>
<comment type="catalytic activity">
    <reaction evidence="3">
        <text>L-threonyl-[protein] + ATP = O-phospho-L-threonyl-[protein] + ADP + H(+)</text>
        <dbReference type="Rhea" id="RHEA:46608"/>
        <dbReference type="Rhea" id="RHEA-COMP:11060"/>
        <dbReference type="Rhea" id="RHEA-COMP:11605"/>
        <dbReference type="ChEBI" id="CHEBI:15378"/>
        <dbReference type="ChEBI" id="CHEBI:30013"/>
        <dbReference type="ChEBI" id="CHEBI:30616"/>
        <dbReference type="ChEBI" id="CHEBI:61977"/>
        <dbReference type="ChEBI" id="CHEBI:456216"/>
        <dbReference type="EC" id="2.7.12.2"/>
    </reaction>
</comment>
<comment type="catalytic activity">
    <reaction evidence="3">
        <text>L-tyrosyl-[protein] + ATP = O-phospho-L-tyrosyl-[protein] + ADP + H(+)</text>
        <dbReference type="Rhea" id="RHEA:10596"/>
        <dbReference type="Rhea" id="RHEA-COMP:10136"/>
        <dbReference type="Rhea" id="RHEA-COMP:20101"/>
        <dbReference type="ChEBI" id="CHEBI:15378"/>
        <dbReference type="ChEBI" id="CHEBI:30616"/>
        <dbReference type="ChEBI" id="CHEBI:46858"/>
        <dbReference type="ChEBI" id="CHEBI:61978"/>
        <dbReference type="ChEBI" id="CHEBI:456216"/>
        <dbReference type="EC" id="2.7.12.2"/>
    </reaction>
</comment>
<comment type="cofactor">
    <cofactor evidence="3">
        <name>Mg(2+)</name>
        <dbReference type="ChEBI" id="CHEBI:18420"/>
    </cofactor>
</comment>
<comment type="activity regulation">
    <text evidence="3">Activated by nsy-1-mediated phosphorylation.</text>
</comment>
<comment type="subunit">
    <text evidence="2 3">Interacts with nsy-1 (PubMed:11751572). Interacts with unc-16 (PubMed:11738026).</text>
</comment>
<comment type="tissue specificity">
    <text evidence="15">Expressed in linker cell in males.</text>
</comment>
<comment type="induction">
    <text evidence="5">By B.thuringiensis pore-forming toxin Cry5B.</text>
</comment>
<comment type="disruption phenotype">
    <text evidence="8 13 14">Upon infection by P.aeruginosa and E.faecalis, RNAi-mediated knockdown results in a reduced up-regulation of gst-4 and gcs-1 expression (PubMed:22216003). Causes a severe reduction in rnt-1 accumulation in the intestine during oxidative stress mediated by paraquat (PubMed:22308034). RNAi-mediated knockdown in a ced-1 mutant background causes a moderate reduction in germline cell apoptosis during oogenesis in response to oxidative and heat shock stresses. The phenotype is more severe and also affects the response to osmotic stress in a mek-1 and ced-1 mutant background (PubMed:16729024).</text>
</comment>
<comment type="similarity">
    <text evidence="16">Belongs to the protein kinase superfamily. STE Ser/Thr protein kinase family. MAP kinase kinase subfamily.</text>
</comment>
<protein>
    <recommendedName>
        <fullName evidence="17">Dual specificity mitogen-activated protein kinase kinase sek-1</fullName>
        <shortName evidence="16">MAP kinase kinase sek-1</shortName>
        <ecNumber evidence="3">2.7.12.2</ecNumber>
    </recommendedName>
</protein>